<geneLocation type="plasmid">
    <name>IncFII R100</name>
    <name>NR1</name>
</geneLocation>
<protein>
    <recommendedName>
        <fullName>Probable transposase for insertion sequence element IS1353</fullName>
    </recommendedName>
</protein>
<accession>Q79CE8</accession>
<name>T1353_SHIFL</name>
<keyword id="KW-0175">Coiled coil</keyword>
<keyword id="KW-0229">DNA integration</keyword>
<keyword id="KW-0233">DNA recombination</keyword>
<keyword id="KW-0255">Endonuclease</keyword>
<keyword id="KW-0378">Hydrolase</keyword>
<keyword id="KW-0460">Magnesium</keyword>
<keyword id="KW-0479">Metal-binding</keyword>
<keyword id="KW-0540">Nuclease</keyword>
<keyword id="KW-0614">Plasmid</keyword>
<reference key="1">
    <citation type="journal article" date="1996" name="J. Bacteriol.">
        <title>The integrons In0, In2, and In5 are defective transposon derivatives.</title>
        <authorList>
            <person name="Brown H.J."/>
            <person name="Stokes H.W."/>
            <person name="Hall R.M."/>
        </authorList>
    </citation>
    <scope>NUCLEOTIDE SEQUENCE [GENOMIC DNA]</scope>
    <source>
        <plasmid>IncFII R100 (NR1)</plasmid>
    </source>
</reference>
<reference key="2">
    <citation type="journal article" date="2003" name="Antimicrob. Agents Chemother.">
        <title>In34, a complex In5 family class 1 integron containing orf513 and dfrA10.</title>
        <authorList>
            <person name="Partridge S.R."/>
            <person name="Hall R.M."/>
        </authorList>
    </citation>
    <scope>SEQUENCE REVISION TO 211-223</scope>
    <source>
        <plasmid>IncFII R100 (NR1)</plasmid>
    </source>
</reference>
<comment type="function">
    <text>Probably involved in the transposition of insertion sequence IS1353.</text>
</comment>
<comment type="miscellaneous">
    <text>IS1353 is an insertion seqeunce sometimes found in In2.</text>
</comment>
<comment type="similarity">
    <text evidence="3">Belongs to the transposase 8 family.</text>
</comment>
<comment type="caution">
    <text evidence="3">A similar protein in IS911 has been shown to only be produced upon ribosomal frameshifting. This does not seem to be the case for this protein, as DNA sequencing shows one complete open reading frame.</text>
</comment>
<sequence>MYSYEDRLRAVRLYLKLGRRMSATLRQLGYPTKNSLKAWLAEFERNQDLRRGYQRIKRQYTDEQKQRAVDHYIEQGYCLSHTIRSLGYPSREALRAWIRDLRPEFARTVVGSSAPTVARSRLEKQQAVIALNLRVGSAKDVADTVGVSRPTLYNWQHRLLGKVPLKPMTKKKGDTSLEQRHEALLRELAELESQNQRLRMENAILEKASELIKKDMGINPLELTSREKTKVVDALRVTFPLANLLCGLKLARSTYFYQRLRQTRPDKYTQVREVIRTIFEDNYRCYGYRRIDSALRLGGMRVSEKVVRRLMAQERLVVRTPRRRRFSAYAGDPTPAVPNLLNRDFHASAPNTKWLTDLTEIHIPAGKVYVSPIVDCFDGLVVAWNIGTSPDANLVNTMLDHAVRTLRPGEHPVIHSDRGSHYRWPAWIRRTENAQLTRSMSKKGCSPDNAACEGFFGRLKTELIYPRNWQHVTLKDLMTRIDAYIHWYNERRIKVSLGGRSPIEYRHAVGLMSV</sequence>
<feature type="chain" id="PRO_0000284142" description="Probable transposase for insertion sequence element IS1353">
    <location>
        <begin position="1"/>
        <end position="514"/>
    </location>
</feature>
<feature type="domain" description="Integrase catalytic" evidence="2">
    <location>
        <begin position="346"/>
        <end position="510"/>
    </location>
</feature>
<feature type="coiled-coil region" evidence="1">
    <location>
        <begin position="172"/>
        <end position="216"/>
    </location>
</feature>
<feature type="binding site" evidence="2">
    <location>
        <position position="357"/>
    </location>
    <ligand>
        <name>Mg(2+)</name>
        <dbReference type="ChEBI" id="CHEBI:18420"/>
        <note>catalytic</note>
    </ligand>
</feature>
<feature type="binding site" evidence="2">
    <location>
        <position position="417"/>
    </location>
    <ligand>
        <name>Mg(2+)</name>
        <dbReference type="ChEBI" id="CHEBI:18420"/>
        <note>catalytic</note>
    </ligand>
</feature>
<proteinExistence type="inferred from homology"/>
<evidence type="ECO:0000255" key="1"/>
<evidence type="ECO:0000255" key="2">
    <source>
        <dbReference type="PROSITE-ProRule" id="PRU00457"/>
    </source>
</evidence>
<evidence type="ECO:0000305" key="3"/>
<organism>
    <name type="scientific">Shigella flexneri</name>
    <dbReference type="NCBI Taxonomy" id="623"/>
    <lineage>
        <taxon>Bacteria</taxon>
        <taxon>Pseudomonadati</taxon>
        <taxon>Pseudomonadota</taxon>
        <taxon>Gammaproteobacteria</taxon>
        <taxon>Enterobacterales</taxon>
        <taxon>Enterobacteriaceae</taxon>
        <taxon>Shigella</taxon>
    </lineage>
</organism>
<dbReference type="EMBL" id="U40482">
    <property type="protein sequence ID" value="AAC44291.2"/>
    <property type="molecule type" value="Genomic_DNA"/>
</dbReference>
<dbReference type="EMBL" id="U42226">
    <property type="protein sequence ID" value="AAC53730.2"/>
    <property type="molecule type" value="Genomic_DNA"/>
</dbReference>
<dbReference type="RefSeq" id="WP_000287615.1">
    <property type="nucleotide sequence ID" value="NZ_UDTD01000066.1"/>
</dbReference>
<dbReference type="GO" id="GO:0003677">
    <property type="term" value="F:DNA binding"/>
    <property type="evidence" value="ECO:0007669"/>
    <property type="project" value="InterPro"/>
</dbReference>
<dbReference type="GO" id="GO:0004519">
    <property type="term" value="F:endonuclease activity"/>
    <property type="evidence" value="ECO:0007669"/>
    <property type="project" value="UniProtKB-KW"/>
</dbReference>
<dbReference type="GO" id="GO:0046872">
    <property type="term" value="F:metal ion binding"/>
    <property type="evidence" value="ECO:0007669"/>
    <property type="project" value="UniProtKB-KW"/>
</dbReference>
<dbReference type="GO" id="GO:0004803">
    <property type="term" value="F:transposase activity"/>
    <property type="evidence" value="ECO:0007669"/>
    <property type="project" value="InterPro"/>
</dbReference>
<dbReference type="GO" id="GO:0015074">
    <property type="term" value="P:DNA integration"/>
    <property type="evidence" value="ECO:0007669"/>
    <property type="project" value="UniProtKB-KW"/>
</dbReference>
<dbReference type="GO" id="GO:0006313">
    <property type="term" value="P:DNA transposition"/>
    <property type="evidence" value="ECO:0007669"/>
    <property type="project" value="InterPro"/>
</dbReference>
<dbReference type="Gene3D" id="3.30.420.10">
    <property type="entry name" value="Ribonuclease H-like superfamily/Ribonuclease H"/>
    <property type="match status" value="1"/>
</dbReference>
<dbReference type="InterPro" id="IPR009057">
    <property type="entry name" value="Homeodomain-like_sf"/>
</dbReference>
<dbReference type="InterPro" id="IPR025948">
    <property type="entry name" value="HTH-like_dom"/>
</dbReference>
<dbReference type="InterPro" id="IPR001584">
    <property type="entry name" value="Integrase_cat-core"/>
</dbReference>
<dbReference type="InterPro" id="IPR012337">
    <property type="entry name" value="RNaseH-like_sf"/>
</dbReference>
<dbReference type="InterPro" id="IPR036397">
    <property type="entry name" value="RNaseH_sf"/>
</dbReference>
<dbReference type="InterPro" id="IPR048020">
    <property type="entry name" value="Transpos_IS3"/>
</dbReference>
<dbReference type="InterPro" id="IPR002514">
    <property type="entry name" value="Transposase_8"/>
</dbReference>
<dbReference type="InterPro" id="IPR050900">
    <property type="entry name" value="Transposase_IS3/IS150/IS904"/>
</dbReference>
<dbReference type="NCBIfam" id="NF033516">
    <property type="entry name" value="transpos_IS3"/>
    <property type="match status" value="1"/>
</dbReference>
<dbReference type="PANTHER" id="PTHR46889">
    <property type="entry name" value="TRANSPOSASE INSF FOR INSERTION SEQUENCE IS3B-RELATED"/>
    <property type="match status" value="1"/>
</dbReference>
<dbReference type="PANTHER" id="PTHR46889:SF4">
    <property type="entry name" value="TRANSPOSASE INSO FOR INSERTION SEQUENCE ELEMENT IS911B-RELATED"/>
    <property type="match status" value="1"/>
</dbReference>
<dbReference type="Pfam" id="PF13276">
    <property type="entry name" value="HTH_21"/>
    <property type="match status" value="1"/>
</dbReference>
<dbReference type="Pfam" id="PF01527">
    <property type="entry name" value="HTH_Tnp_1"/>
    <property type="match status" value="1"/>
</dbReference>
<dbReference type="Pfam" id="PF00665">
    <property type="entry name" value="rve"/>
    <property type="match status" value="1"/>
</dbReference>
<dbReference type="Pfam" id="PF13333">
    <property type="entry name" value="rve_2"/>
    <property type="match status" value="1"/>
</dbReference>
<dbReference type="SUPFAM" id="SSF46689">
    <property type="entry name" value="Homeodomain-like"/>
    <property type="match status" value="2"/>
</dbReference>
<dbReference type="SUPFAM" id="SSF53098">
    <property type="entry name" value="Ribonuclease H-like"/>
    <property type="match status" value="1"/>
</dbReference>
<dbReference type="PROSITE" id="PS50994">
    <property type="entry name" value="INTEGRASE"/>
    <property type="match status" value="1"/>
</dbReference>